<name>Y501_HYDS0</name>
<gene>
    <name type="ordered locus">HY04AAS1_0501</name>
</gene>
<reference key="1">
    <citation type="journal article" date="2009" name="J. Bacteriol.">
        <title>Complete and draft genome sequences of six members of the Aquificales.</title>
        <authorList>
            <person name="Reysenbach A.-L."/>
            <person name="Hamamura N."/>
            <person name="Podar M."/>
            <person name="Griffiths E."/>
            <person name="Ferreira S."/>
            <person name="Hochstein R."/>
            <person name="Heidelberg J."/>
            <person name="Johnson J."/>
            <person name="Mead D."/>
            <person name="Pohorille A."/>
            <person name="Sarmiento M."/>
            <person name="Schweighofer K."/>
            <person name="Seshadri R."/>
            <person name="Voytek M.A."/>
        </authorList>
    </citation>
    <scope>NUCLEOTIDE SEQUENCE [LARGE SCALE GENOMIC DNA]</scope>
    <source>
        <strain>Y04AAS1</strain>
    </source>
</reference>
<dbReference type="EMBL" id="CP001130">
    <property type="protein sequence ID" value="ACG57188.1"/>
    <property type="molecule type" value="Genomic_DNA"/>
</dbReference>
<dbReference type="RefSeq" id="WP_012513544.1">
    <property type="nucleotide sequence ID" value="NC_011126.1"/>
</dbReference>
<dbReference type="SMR" id="B4U7S7"/>
<dbReference type="STRING" id="380749.HY04AAS1_0501"/>
<dbReference type="KEGG" id="hya:HY04AAS1_0501"/>
<dbReference type="eggNOG" id="COG0217">
    <property type="taxonomic scope" value="Bacteria"/>
</dbReference>
<dbReference type="HOGENOM" id="CLU_062974_2_2_0"/>
<dbReference type="OrthoDB" id="9781053at2"/>
<dbReference type="GO" id="GO:0005829">
    <property type="term" value="C:cytosol"/>
    <property type="evidence" value="ECO:0007669"/>
    <property type="project" value="TreeGrafter"/>
</dbReference>
<dbReference type="GO" id="GO:0003677">
    <property type="term" value="F:DNA binding"/>
    <property type="evidence" value="ECO:0007669"/>
    <property type="project" value="UniProtKB-UniRule"/>
</dbReference>
<dbReference type="GO" id="GO:0006355">
    <property type="term" value="P:regulation of DNA-templated transcription"/>
    <property type="evidence" value="ECO:0007669"/>
    <property type="project" value="UniProtKB-UniRule"/>
</dbReference>
<dbReference type="FunFam" id="1.10.10.200:FF:000002">
    <property type="entry name" value="Probable transcriptional regulatory protein CLM62_37755"/>
    <property type="match status" value="1"/>
</dbReference>
<dbReference type="FunFam" id="3.30.70.980:FF:000002">
    <property type="entry name" value="Probable transcriptional regulatory protein YebC"/>
    <property type="match status" value="1"/>
</dbReference>
<dbReference type="Gene3D" id="1.10.10.200">
    <property type="match status" value="1"/>
</dbReference>
<dbReference type="Gene3D" id="3.30.70.980">
    <property type="match status" value="2"/>
</dbReference>
<dbReference type="HAMAP" id="MF_00693">
    <property type="entry name" value="Transcrip_reg_TACO1"/>
    <property type="match status" value="1"/>
</dbReference>
<dbReference type="InterPro" id="IPR017856">
    <property type="entry name" value="Integrase-like_N"/>
</dbReference>
<dbReference type="InterPro" id="IPR048300">
    <property type="entry name" value="TACO1_YebC-like_2nd/3rd_dom"/>
</dbReference>
<dbReference type="InterPro" id="IPR049083">
    <property type="entry name" value="TACO1_YebC_N"/>
</dbReference>
<dbReference type="InterPro" id="IPR002876">
    <property type="entry name" value="Transcrip_reg_TACO1-like"/>
</dbReference>
<dbReference type="InterPro" id="IPR026564">
    <property type="entry name" value="Transcrip_reg_TACO1-like_dom3"/>
</dbReference>
<dbReference type="InterPro" id="IPR029072">
    <property type="entry name" value="YebC-like"/>
</dbReference>
<dbReference type="NCBIfam" id="NF001030">
    <property type="entry name" value="PRK00110.1"/>
    <property type="match status" value="1"/>
</dbReference>
<dbReference type="NCBIfam" id="NF009044">
    <property type="entry name" value="PRK12378.1"/>
    <property type="match status" value="1"/>
</dbReference>
<dbReference type="NCBIfam" id="TIGR01033">
    <property type="entry name" value="YebC/PmpR family DNA-binding transcriptional regulator"/>
    <property type="match status" value="1"/>
</dbReference>
<dbReference type="PANTHER" id="PTHR12532:SF6">
    <property type="entry name" value="TRANSCRIPTIONAL REGULATORY PROTEIN YEBC-RELATED"/>
    <property type="match status" value="1"/>
</dbReference>
<dbReference type="PANTHER" id="PTHR12532">
    <property type="entry name" value="TRANSLATIONAL ACTIVATOR OF CYTOCHROME C OXIDASE 1"/>
    <property type="match status" value="1"/>
</dbReference>
<dbReference type="Pfam" id="PF20772">
    <property type="entry name" value="TACO1_YebC_N"/>
    <property type="match status" value="1"/>
</dbReference>
<dbReference type="Pfam" id="PF01709">
    <property type="entry name" value="Transcrip_reg"/>
    <property type="match status" value="1"/>
</dbReference>
<dbReference type="SUPFAM" id="SSF75625">
    <property type="entry name" value="YebC-like"/>
    <property type="match status" value="1"/>
</dbReference>
<feature type="chain" id="PRO_1000132204" description="Probable transcriptional regulatory protein HY04AAS1_0501">
    <location>
        <begin position="1"/>
        <end position="249"/>
    </location>
</feature>
<accession>B4U7S7</accession>
<proteinExistence type="inferred from homology"/>
<organism>
    <name type="scientific">Hydrogenobaculum sp. (strain Y04AAS1)</name>
    <dbReference type="NCBI Taxonomy" id="380749"/>
    <lineage>
        <taxon>Bacteria</taxon>
        <taxon>Pseudomonadati</taxon>
        <taxon>Aquificota</taxon>
        <taxon>Aquificia</taxon>
        <taxon>Aquificales</taxon>
        <taxon>Aquificaceae</taxon>
        <taxon>Hydrogenobaculum</taxon>
    </lineage>
</organism>
<protein>
    <recommendedName>
        <fullName evidence="1">Probable transcriptional regulatory protein HY04AAS1_0501</fullName>
    </recommendedName>
</protein>
<evidence type="ECO:0000255" key="1">
    <source>
        <dbReference type="HAMAP-Rule" id="MF_00693"/>
    </source>
</evidence>
<keyword id="KW-0963">Cytoplasm</keyword>
<keyword id="KW-0238">DNA-binding</keyword>
<keyword id="KW-0804">Transcription</keyword>
<keyword id="KW-0805">Transcription regulation</keyword>
<sequence>MAGHSHWAQIKHKKAKVDAQKGKLFGKLIREITVATKLGGPDPNANPRLRIAIEAARKVSMPMDTIEKAIKRGTGNDKEGALEEIVYEGYGPGGTAIMVVVATDNRNKATSEVRHAFSKHGGNLGSSGCVSYLFEQKGVIEIPKEATDEEKLMEAALEAGADDVESTEDMFIVYTNPKDVYTIKDILASKGFTIESAKTSLIPTTTVEIKDVDTAKKLLNLLEHLDELDEVQEVISNFEIDKDILAALG</sequence>
<comment type="subcellular location">
    <subcellularLocation>
        <location evidence="1">Cytoplasm</location>
    </subcellularLocation>
</comment>
<comment type="similarity">
    <text evidence="1">Belongs to the TACO1 family.</text>
</comment>